<keyword id="KW-0007">Acetylation</keyword>
<keyword id="KW-0025">Alternative splicing</keyword>
<keyword id="KW-0175">Coiled coil</keyword>
<keyword id="KW-0963">Cytoplasm</keyword>
<keyword id="KW-0238">DNA-binding</keyword>
<keyword id="KW-1017">Isopeptide bond</keyword>
<keyword id="KW-0539">Nucleus</keyword>
<keyword id="KW-0597">Phosphoprotein</keyword>
<keyword id="KW-1185">Reference proteome</keyword>
<keyword id="KW-0678">Repressor</keyword>
<keyword id="KW-0804">Transcription</keyword>
<keyword id="KW-0805">Transcription regulation</keyword>
<keyword id="KW-0832">Ubl conjugation</keyword>
<name>LRRF1_MOUSE</name>
<proteinExistence type="evidence at protein level"/>
<reference key="1">
    <citation type="journal article" date="1998" name="J. Biol. Chem.">
        <title>Identification of the binding partners for flightless I, a novel protein bridging the leucine-rich repeat and the gelsolin superfamilies.</title>
        <authorList>
            <person name="Liu Y.-T."/>
            <person name="Yin H.L."/>
        </authorList>
    </citation>
    <scope>NUCLEOTIDE SEQUENCE [MRNA] (ISOFORM 2)</scope>
    <scope>INTERACTION WITH FLII</scope>
    <scope>TISSUE SPECIFICITY</scope>
    <source>
        <tissue>Skeletal muscle</tissue>
    </source>
</reference>
<reference key="2">
    <citation type="journal article" date="2005" name="Science">
        <title>The transcriptional landscape of the mammalian genome.</title>
        <authorList>
            <person name="Carninci P."/>
            <person name="Kasukawa T."/>
            <person name="Katayama S."/>
            <person name="Gough J."/>
            <person name="Frith M.C."/>
            <person name="Maeda N."/>
            <person name="Oyama R."/>
            <person name="Ravasi T."/>
            <person name="Lenhard B."/>
            <person name="Wells C."/>
            <person name="Kodzius R."/>
            <person name="Shimokawa K."/>
            <person name="Bajic V.B."/>
            <person name="Brenner S.E."/>
            <person name="Batalov S."/>
            <person name="Forrest A.R."/>
            <person name="Zavolan M."/>
            <person name="Davis M.J."/>
            <person name="Wilming L.G."/>
            <person name="Aidinis V."/>
            <person name="Allen J.E."/>
            <person name="Ambesi-Impiombato A."/>
            <person name="Apweiler R."/>
            <person name="Aturaliya R.N."/>
            <person name="Bailey T.L."/>
            <person name="Bansal M."/>
            <person name="Baxter L."/>
            <person name="Beisel K.W."/>
            <person name="Bersano T."/>
            <person name="Bono H."/>
            <person name="Chalk A.M."/>
            <person name="Chiu K.P."/>
            <person name="Choudhary V."/>
            <person name="Christoffels A."/>
            <person name="Clutterbuck D.R."/>
            <person name="Crowe M.L."/>
            <person name="Dalla E."/>
            <person name="Dalrymple B.P."/>
            <person name="de Bono B."/>
            <person name="Della Gatta G."/>
            <person name="di Bernardo D."/>
            <person name="Down T."/>
            <person name="Engstrom P."/>
            <person name="Fagiolini M."/>
            <person name="Faulkner G."/>
            <person name="Fletcher C.F."/>
            <person name="Fukushima T."/>
            <person name="Furuno M."/>
            <person name="Futaki S."/>
            <person name="Gariboldi M."/>
            <person name="Georgii-Hemming P."/>
            <person name="Gingeras T.R."/>
            <person name="Gojobori T."/>
            <person name="Green R.E."/>
            <person name="Gustincich S."/>
            <person name="Harbers M."/>
            <person name="Hayashi Y."/>
            <person name="Hensch T.K."/>
            <person name="Hirokawa N."/>
            <person name="Hill D."/>
            <person name="Huminiecki L."/>
            <person name="Iacono M."/>
            <person name="Ikeo K."/>
            <person name="Iwama A."/>
            <person name="Ishikawa T."/>
            <person name="Jakt M."/>
            <person name="Kanapin A."/>
            <person name="Katoh M."/>
            <person name="Kawasawa Y."/>
            <person name="Kelso J."/>
            <person name="Kitamura H."/>
            <person name="Kitano H."/>
            <person name="Kollias G."/>
            <person name="Krishnan S.P."/>
            <person name="Kruger A."/>
            <person name="Kummerfeld S.K."/>
            <person name="Kurochkin I.V."/>
            <person name="Lareau L.F."/>
            <person name="Lazarevic D."/>
            <person name="Lipovich L."/>
            <person name="Liu J."/>
            <person name="Liuni S."/>
            <person name="McWilliam S."/>
            <person name="Madan Babu M."/>
            <person name="Madera M."/>
            <person name="Marchionni L."/>
            <person name="Matsuda H."/>
            <person name="Matsuzawa S."/>
            <person name="Miki H."/>
            <person name="Mignone F."/>
            <person name="Miyake S."/>
            <person name="Morris K."/>
            <person name="Mottagui-Tabar S."/>
            <person name="Mulder N."/>
            <person name="Nakano N."/>
            <person name="Nakauchi H."/>
            <person name="Ng P."/>
            <person name="Nilsson R."/>
            <person name="Nishiguchi S."/>
            <person name="Nishikawa S."/>
            <person name="Nori F."/>
            <person name="Ohara O."/>
            <person name="Okazaki Y."/>
            <person name="Orlando V."/>
            <person name="Pang K.C."/>
            <person name="Pavan W.J."/>
            <person name="Pavesi G."/>
            <person name="Pesole G."/>
            <person name="Petrovsky N."/>
            <person name="Piazza S."/>
            <person name="Reed J."/>
            <person name="Reid J.F."/>
            <person name="Ring B.Z."/>
            <person name="Ringwald M."/>
            <person name="Rost B."/>
            <person name="Ruan Y."/>
            <person name="Salzberg S.L."/>
            <person name="Sandelin A."/>
            <person name="Schneider C."/>
            <person name="Schoenbach C."/>
            <person name="Sekiguchi K."/>
            <person name="Semple C.A."/>
            <person name="Seno S."/>
            <person name="Sessa L."/>
            <person name="Sheng Y."/>
            <person name="Shibata Y."/>
            <person name="Shimada H."/>
            <person name="Shimada K."/>
            <person name="Silva D."/>
            <person name="Sinclair B."/>
            <person name="Sperling S."/>
            <person name="Stupka E."/>
            <person name="Sugiura K."/>
            <person name="Sultana R."/>
            <person name="Takenaka Y."/>
            <person name="Taki K."/>
            <person name="Tammoja K."/>
            <person name="Tan S.L."/>
            <person name="Tang S."/>
            <person name="Taylor M.S."/>
            <person name="Tegner J."/>
            <person name="Teichmann S.A."/>
            <person name="Ueda H.R."/>
            <person name="van Nimwegen E."/>
            <person name="Verardo R."/>
            <person name="Wei C.L."/>
            <person name="Yagi K."/>
            <person name="Yamanishi H."/>
            <person name="Zabarovsky E."/>
            <person name="Zhu S."/>
            <person name="Zimmer A."/>
            <person name="Hide W."/>
            <person name="Bult C."/>
            <person name="Grimmond S.M."/>
            <person name="Teasdale R.D."/>
            <person name="Liu E.T."/>
            <person name="Brusic V."/>
            <person name="Quackenbush J."/>
            <person name="Wahlestedt C."/>
            <person name="Mattick J.S."/>
            <person name="Hume D.A."/>
            <person name="Kai C."/>
            <person name="Sasaki D."/>
            <person name="Tomaru Y."/>
            <person name="Fukuda S."/>
            <person name="Kanamori-Katayama M."/>
            <person name="Suzuki M."/>
            <person name="Aoki J."/>
            <person name="Arakawa T."/>
            <person name="Iida J."/>
            <person name="Imamura K."/>
            <person name="Itoh M."/>
            <person name="Kato T."/>
            <person name="Kawaji H."/>
            <person name="Kawagashira N."/>
            <person name="Kawashima T."/>
            <person name="Kojima M."/>
            <person name="Kondo S."/>
            <person name="Konno H."/>
            <person name="Nakano K."/>
            <person name="Ninomiya N."/>
            <person name="Nishio T."/>
            <person name="Okada M."/>
            <person name="Plessy C."/>
            <person name="Shibata K."/>
            <person name="Shiraki T."/>
            <person name="Suzuki S."/>
            <person name="Tagami M."/>
            <person name="Waki K."/>
            <person name="Watahiki A."/>
            <person name="Okamura-Oho Y."/>
            <person name="Suzuki H."/>
            <person name="Kawai J."/>
            <person name="Hayashizaki Y."/>
        </authorList>
    </citation>
    <scope>NUCLEOTIDE SEQUENCE [LARGE SCALE MRNA] (ISOFORMS 1 AND 3)</scope>
    <source>
        <strain>C57BL/6J</strain>
        <tissue>Egg</tissue>
        <tissue>Thymus</tissue>
    </source>
</reference>
<reference key="3">
    <citation type="journal article" date="2007" name="Proc. Natl. Acad. Sci. U.S.A.">
        <title>Large-scale phosphorylation analysis of mouse liver.</title>
        <authorList>
            <person name="Villen J."/>
            <person name="Beausoleil S.A."/>
            <person name="Gerber S.A."/>
            <person name="Gygi S.P."/>
        </authorList>
    </citation>
    <scope>IDENTIFICATION BY MASS SPECTROMETRY [LARGE SCALE ANALYSIS]</scope>
    <source>
        <tissue>Liver</tissue>
    </source>
</reference>
<reference key="4">
    <citation type="journal article" date="2010" name="Cell">
        <title>A tissue-specific atlas of mouse protein phosphorylation and expression.</title>
        <authorList>
            <person name="Huttlin E.L."/>
            <person name="Jedrychowski M.P."/>
            <person name="Elias J.E."/>
            <person name="Goswami T."/>
            <person name="Rad R."/>
            <person name="Beausoleil S.A."/>
            <person name="Villen J."/>
            <person name="Haas W."/>
            <person name="Sowa M.E."/>
            <person name="Gygi S.P."/>
        </authorList>
    </citation>
    <scope>PHOSPHORYLATION [LARGE SCALE ANALYSIS] AT SER-83; SER-84; SER-88; SER-92; SER-346; SER-348; SER-547 AND SER-614</scope>
    <scope>PHOSPHORYLATION [LARGE SCALE ANALYSIS] AT SER-90 AND SER-97 (ISOFORM 2)</scope>
    <scope>IDENTIFICATION BY MASS SPECTROMETRY [LARGE SCALE ANALYSIS]</scope>
    <source>
        <tissue>Brain</tissue>
        <tissue>Brown adipose tissue</tissue>
        <tissue>Heart</tissue>
        <tissue>Kidney</tissue>
        <tissue>Liver</tissue>
        <tissue>Lung</tissue>
        <tissue>Pancreas</tissue>
        <tissue>Spleen</tissue>
    </source>
</reference>
<organism>
    <name type="scientific">Mus musculus</name>
    <name type="common">Mouse</name>
    <dbReference type="NCBI Taxonomy" id="10090"/>
    <lineage>
        <taxon>Eukaryota</taxon>
        <taxon>Metazoa</taxon>
        <taxon>Chordata</taxon>
        <taxon>Craniata</taxon>
        <taxon>Vertebrata</taxon>
        <taxon>Euteleostomi</taxon>
        <taxon>Mammalia</taxon>
        <taxon>Eutheria</taxon>
        <taxon>Euarchontoglires</taxon>
        <taxon>Glires</taxon>
        <taxon>Rodentia</taxon>
        <taxon>Myomorpha</taxon>
        <taxon>Muroidea</taxon>
        <taxon>Muridae</taxon>
        <taxon>Murinae</taxon>
        <taxon>Mus</taxon>
        <taxon>Mus</taxon>
    </lineage>
</organism>
<dbReference type="EMBL" id="AF045573">
    <property type="protein sequence ID" value="AAC40072.1"/>
    <property type="molecule type" value="mRNA"/>
</dbReference>
<dbReference type="EMBL" id="AK134120">
    <property type="protein sequence ID" value="BAE22022.1"/>
    <property type="molecule type" value="mRNA"/>
</dbReference>
<dbReference type="EMBL" id="AK162191">
    <property type="protein sequence ID" value="BAE36781.1"/>
    <property type="molecule type" value="mRNA"/>
</dbReference>
<dbReference type="CCDS" id="CCDS35662.1">
    <molecule id="Q3UZ39-2"/>
</dbReference>
<dbReference type="CCDS" id="CCDS48320.1">
    <molecule id="Q3UZ39-1"/>
</dbReference>
<dbReference type="RefSeq" id="NP_001104781.1">
    <molecule id="Q3UZ39-1"/>
    <property type="nucleotide sequence ID" value="NM_001111311.1"/>
</dbReference>
<dbReference type="RefSeq" id="NP_001104782.1">
    <property type="nucleotide sequence ID" value="NM_001111312.1"/>
</dbReference>
<dbReference type="RefSeq" id="NP_032541.1">
    <molecule id="Q3UZ39-2"/>
    <property type="nucleotide sequence ID" value="NM_008515.4"/>
</dbReference>
<dbReference type="SMR" id="Q3UZ39"/>
<dbReference type="BioGRID" id="201207">
    <property type="interactions" value="16"/>
</dbReference>
<dbReference type="FunCoup" id="Q3UZ39">
    <property type="interactions" value="552"/>
</dbReference>
<dbReference type="IntAct" id="Q3UZ39">
    <property type="interactions" value="8"/>
</dbReference>
<dbReference type="MINT" id="Q3UZ39"/>
<dbReference type="STRING" id="10090.ENSMUSP00000095254"/>
<dbReference type="GlyGen" id="Q3UZ39">
    <property type="glycosylation" value="3 sites, 1 O-linked glycan (1 site)"/>
</dbReference>
<dbReference type="iPTMnet" id="Q3UZ39"/>
<dbReference type="PhosphoSitePlus" id="Q3UZ39"/>
<dbReference type="SwissPalm" id="Q3UZ39"/>
<dbReference type="jPOST" id="Q3UZ39"/>
<dbReference type="PaxDb" id="10090-ENSMUSP00000095254"/>
<dbReference type="PeptideAtlas" id="Q3UZ39"/>
<dbReference type="ProteomicsDB" id="290171">
    <molecule id="Q3UZ39-1"/>
</dbReference>
<dbReference type="ProteomicsDB" id="290172">
    <molecule id="Q3UZ39-2"/>
</dbReference>
<dbReference type="ProteomicsDB" id="290173">
    <molecule id="Q3UZ39-3"/>
</dbReference>
<dbReference type="Pumba" id="Q3UZ39"/>
<dbReference type="Antibodypedia" id="1000">
    <property type="antibodies" value="347 antibodies from 31 providers"/>
</dbReference>
<dbReference type="DNASU" id="16978"/>
<dbReference type="Ensembl" id="ENSMUST00000097649.10">
    <molecule id="Q3UZ39-1"/>
    <property type="protein sequence ID" value="ENSMUSP00000095254.4"/>
    <property type="gene ID" value="ENSMUSG00000026305.16"/>
</dbReference>
<dbReference type="Ensembl" id="ENSMUST00000097650.10">
    <molecule id="Q3UZ39-2"/>
    <property type="protein sequence ID" value="ENSMUSP00000095255.4"/>
    <property type="gene ID" value="ENSMUSG00000026305.16"/>
</dbReference>
<dbReference type="GeneID" id="16978"/>
<dbReference type="KEGG" id="mmu:16978"/>
<dbReference type="UCSC" id="uc007bzr.2">
    <molecule id="Q3UZ39-1"/>
    <property type="organism name" value="mouse"/>
</dbReference>
<dbReference type="UCSC" id="uc007bzs.2">
    <molecule id="Q3UZ39-2"/>
    <property type="organism name" value="mouse"/>
</dbReference>
<dbReference type="UCSC" id="uc007bzu.2">
    <molecule id="Q3UZ39-3"/>
    <property type="organism name" value="mouse"/>
</dbReference>
<dbReference type="AGR" id="MGI:1342770"/>
<dbReference type="CTD" id="9208"/>
<dbReference type="MGI" id="MGI:1342770">
    <property type="gene designation" value="Lrrfip1"/>
</dbReference>
<dbReference type="VEuPathDB" id="HostDB:ENSMUSG00000026305"/>
<dbReference type="eggNOG" id="KOG2010">
    <property type="taxonomic scope" value="Eukaryota"/>
</dbReference>
<dbReference type="GeneTree" id="ENSGT00530000063564"/>
<dbReference type="HOGENOM" id="CLU_018924_0_0_1"/>
<dbReference type="InParanoid" id="Q3UZ39"/>
<dbReference type="OMA" id="RCMVEVP"/>
<dbReference type="OrthoDB" id="10028421at2759"/>
<dbReference type="PhylomeDB" id="Q3UZ39"/>
<dbReference type="TreeFam" id="TF314109"/>
<dbReference type="BioGRID-ORCS" id="16978">
    <property type="hits" value="3 hits in 77 CRISPR screens"/>
</dbReference>
<dbReference type="CD-CODE" id="CE726F99">
    <property type="entry name" value="Postsynaptic density"/>
</dbReference>
<dbReference type="ChiTaRS" id="Lrrfip1">
    <property type="organism name" value="mouse"/>
</dbReference>
<dbReference type="PRO" id="PR:Q3UZ39"/>
<dbReference type="Proteomes" id="UP000000589">
    <property type="component" value="Chromosome 1"/>
</dbReference>
<dbReference type="RNAct" id="Q3UZ39">
    <property type="molecule type" value="protein"/>
</dbReference>
<dbReference type="Bgee" id="ENSMUSG00000026305">
    <property type="expression patterns" value="Expressed in secondary oocyte and 255 other cell types or tissues"/>
</dbReference>
<dbReference type="ExpressionAtlas" id="Q3UZ39">
    <property type="expression patterns" value="baseline and differential"/>
</dbReference>
<dbReference type="GO" id="GO:0005737">
    <property type="term" value="C:cytoplasm"/>
    <property type="evidence" value="ECO:0007669"/>
    <property type="project" value="UniProtKB-SubCell"/>
</dbReference>
<dbReference type="GO" id="GO:0005634">
    <property type="term" value="C:nucleus"/>
    <property type="evidence" value="ECO:0007669"/>
    <property type="project" value="UniProtKB-SubCell"/>
</dbReference>
<dbReference type="GO" id="GO:0003677">
    <property type="term" value="F:DNA binding"/>
    <property type="evidence" value="ECO:0000250"/>
    <property type="project" value="UniProtKB"/>
</dbReference>
<dbReference type="GO" id="GO:0006355">
    <property type="term" value="P:regulation of DNA-templated transcription"/>
    <property type="evidence" value="ECO:0007669"/>
    <property type="project" value="InterPro"/>
</dbReference>
<dbReference type="FunFam" id="1.20.5.4090:FF:000001">
    <property type="entry name" value="leucine-rich repeat flightless-interacting protein 2 isoform X1"/>
    <property type="match status" value="1"/>
</dbReference>
<dbReference type="Gene3D" id="1.20.5.4090">
    <property type="match status" value="1"/>
</dbReference>
<dbReference type="InterPro" id="IPR019139">
    <property type="entry name" value="LRRFIP1/2"/>
</dbReference>
<dbReference type="PANTHER" id="PTHR19212">
    <property type="entry name" value="LEUCINE RICH REPEAT IN FLII INTERACTING PROTEIN"/>
    <property type="match status" value="1"/>
</dbReference>
<dbReference type="PANTHER" id="PTHR19212:SF5">
    <property type="entry name" value="LEUCINE-RICH REPEAT FLIGHTLESS-INTERACTING PROTEIN 1"/>
    <property type="match status" value="1"/>
</dbReference>
<dbReference type="Pfam" id="PF09738">
    <property type="entry name" value="LRRFIP"/>
    <property type="match status" value="1"/>
</dbReference>
<comment type="function">
    <text evidence="1">Transcriptional repressor which preferentially binds to the GC-rich consensus sequence (5'-AGCCCCCGGCG-3') and may regulate expression of TNF, EGFR and PDGFA. May control smooth muscle cells proliferation following artery injury through PDGFA repression. May also bind double-stranded RNA (By similarity). Positively regulates Toll-like receptor (TLR) signaling in response to agonist probably by competing with the negative FLII regulator for MYD88-binding (By similarity).</text>
</comment>
<comment type="subunit">
    <text evidence="1">Homodimer. May also form higher oligomers. Interacts with FLII. Interacts with MYD88 (By similarity). Competes with FLII for MyD88-binding, even in the absence of LPS (By similarity).</text>
</comment>
<comment type="interaction">
    <interactant intactId="EBI-2270972">
        <id>Q3UZ39</id>
    </interactant>
    <interactant intactId="EBI-537752">
        <id>Q925T6</id>
        <label>Grip1</label>
    </interactant>
    <organismsDiffer>false</organismsDiffer>
    <experiments>2</experiments>
</comment>
<comment type="interaction">
    <interactant intactId="EBI-2270972">
        <id>Q3UZ39</id>
    </interactant>
    <interactant intactId="EBI-972394">
        <id>O42486</id>
        <label>Bcat</label>
    </interactant>
    <organismsDiffer>true</organismsDiffer>
    <experiments>2</experiments>
</comment>
<comment type="subcellular location">
    <subcellularLocation>
        <location>Nucleus</location>
    </subcellularLocation>
    <subcellularLocation>
        <location evidence="1">Cytoplasm</location>
    </subcellularLocation>
</comment>
<comment type="alternative products">
    <event type="alternative splicing"/>
    <isoform>
        <id>Q3UZ39-1</id>
        <name>1</name>
        <sequence type="displayed"/>
    </isoform>
    <isoform>
        <id>Q3UZ39-2</id>
        <name>2</name>
        <sequence type="described" ref="VSP_020267 VSP_020268 VSP_020269 VSP_020271 VSP_020272"/>
    </isoform>
    <isoform>
        <id>Q3UZ39-3</id>
        <name>3</name>
        <sequence type="described" ref="VSP_020266 VSP_020270"/>
    </isoform>
</comment>
<comment type="tissue specificity">
    <text evidence="5">Ubiquitously expressed.</text>
</comment>
<comment type="domain">
    <text evidence="1">The DNA-binding domain is intrinsically unstructured.</text>
</comment>
<comment type="domain">
    <text evidence="1">The coiled coil mediates dimerization.</text>
</comment>
<comment type="similarity">
    <text evidence="8">Belongs to the LRRFIP family.</text>
</comment>
<feature type="initiator methionine" description="Removed" evidence="2">
    <location>
        <position position="1"/>
    </location>
</feature>
<feature type="chain" id="PRO_0000248393" description="Leucine-rich repeat flightless-interacting protein 1">
    <location>
        <begin position="2"/>
        <end position="729"/>
    </location>
</feature>
<feature type="region of interest" description="Disordered" evidence="4">
    <location>
        <begin position="40"/>
        <end position="98"/>
    </location>
</feature>
<feature type="region of interest" description="Disordered" evidence="4">
    <location>
        <begin position="253"/>
        <end position="729"/>
    </location>
</feature>
<feature type="region of interest" description="DNA-binding" evidence="1">
    <location>
        <begin position="465"/>
        <end position="567"/>
    </location>
</feature>
<feature type="coiled-coil region" evidence="1">
    <location>
        <begin position="94"/>
        <end position="194"/>
    </location>
</feature>
<feature type="compositionally biased region" description="Basic and acidic residues" evidence="4">
    <location>
        <begin position="40"/>
        <end position="65"/>
    </location>
</feature>
<feature type="compositionally biased region" description="Low complexity" evidence="4">
    <location>
        <begin position="78"/>
        <end position="94"/>
    </location>
</feature>
<feature type="compositionally biased region" description="Polar residues" evidence="4">
    <location>
        <begin position="260"/>
        <end position="272"/>
    </location>
</feature>
<feature type="compositionally biased region" description="Basic and acidic residues" evidence="4">
    <location>
        <begin position="277"/>
        <end position="297"/>
    </location>
</feature>
<feature type="compositionally biased region" description="Polar residues" evidence="4">
    <location>
        <begin position="313"/>
        <end position="326"/>
    </location>
</feature>
<feature type="compositionally biased region" description="Basic and acidic residues" evidence="4">
    <location>
        <begin position="327"/>
        <end position="343"/>
    </location>
</feature>
<feature type="compositionally biased region" description="Polar residues" evidence="4">
    <location>
        <begin position="344"/>
        <end position="354"/>
    </location>
</feature>
<feature type="compositionally biased region" description="Basic and acidic residues" evidence="4">
    <location>
        <begin position="435"/>
        <end position="445"/>
    </location>
</feature>
<feature type="compositionally biased region" description="Basic and acidic residues" evidence="4">
    <location>
        <begin position="482"/>
        <end position="494"/>
    </location>
</feature>
<feature type="compositionally biased region" description="Polar residues" evidence="4">
    <location>
        <begin position="506"/>
        <end position="523"/>
    </location>
</feature>
<feature type="compositionally biased region" description="Basic residues" evidence="4">
    <location>
        <begin position="550"/>
        <end position="564"/>
    </location>
</feature>
<feature type="compositionally biased region" description="Basic and acidic residues" evidence="4">
    <location>
        <begin position="608"/>
        <end position="618"/>
    </location>
</feature>
<feature type="compositionally biased region" description="Polar residues" evidence="4">
    <location>
        <begin position="667"/>
        <end position="684"/>
    </location>
</feature>
<feature type="compositionally biased region" description="Polar residues" evidence="4">
    <location>
        <begin position="693"/>
        <end position="710"/>
    </location>
</feature>
<feature type="compositionally biased region" description="Basic and acidic residues" evidence="4">
    <location>
        <begin position="713"/>
        <end position="729"/>
    </location>
</feature>
<feature type="modified residue" description="N-acetylthreonine" evidence="2">
    <location>
        <position position="2"/>
    </location>
</feature>
<feature type="modified residue" description="Phosphoserine" evidence="2">
    <location>
        <position position="16"/>
    </location>
</feature>
<feature type="modified residue" description="Phosphoserine" evidence="9">
    <location>
        <position position="83"/>
    </location>
</feature>
<feature type="modified residue" description="Phosphoserine" evidence="9">
    <location>
        <position position="84"/>
    </location>
</feature>
<feature type="modified residue" description="Phosphoserine" evidence="9">
    <location>
        <position position="88"/>
    </location>
</feature>
<feature type="modified residue" description="Phosphoserine" evidence="9">
    <location>
        <position position="92"/>
    </location>
</feature>
<feature type="modified residue" description="Phosphoserine" evidence="3">
    <location>
        <position position="302"/>
    </location>
</feature>
<feature type="modified residue" description="Phosphoserine" evidence="9">
    <location>
        <position position="346"/>
    </location>
</feature>
<feature type="modified residue" description="Phosphoserine" evidence="9">
    <location>
        <position position="348"/>
    </location>
</feature>
<feature type="modified residue" description="Phosphoserine" evidence="2">
    <location>
        <position position="538"/>
    </location>
</feature>
<feature type="modified residue" description="Phosphoserine" evidence="9">
    <location>
        <position position="547"/>
    </location>
</feature>
<feature type="modified residue" description="Phosphoserine" evidence="9">
    <location>
        <position position="614"/>
    </location>
</feature>
<feature type="modified residue" description="Phosphoserine" evidence="3">
    <location>
        <position position="670"/>
    </location>
</feature>
<feature type="cross-link" description="Glycyl lysine isopeptide (Lys-Gly) (interchain with G-Cter in SUMO1)" evidence="2">
    <location>
        <position position="249"/>
    </location>
</feature>
<feature type="splice variant" id="VSP_020266" description="In isoform 3." evidence="6">
    <location>
        <begin position="1"/>
        <end position="239"/>
    </location>
</feature>
<feature type="splice variant" id="VSP_020267" description="In isoform 2." evidence="7">
    <original>E</original>
    <variation>EIYQVQKKYYGLDTKWGDIEQWMEDSERYSRRFRRNTSASDEDERLSVGSRGSLRTNGYDGDYCGSQSLSRRSGRGLSCSNLGLPSSGLASKPLSTQNGSRASMLDESSLYGARRGSACGSRAPSEYGSHLNSSSRASSRASSARASPV</variation>
    <location>
        <position position="51"/>
    </location>
</feature>
<feature type="splice variant" id="VSP_020268" description="In isoform 2." evidence="7">
    <original>I</original>
    <variation>IKELNELKDQIQDVEGKYMQGLKEM</variation>
    <location>
        <position position="104"/>
    </location>
</feature>
<feature type="splice variant" id="VSP_020269" description="In isoform 2." evidence="7">
    <original>E</original>
    <variation>EEIRQLQQKQAGFIREISDLQETIEWKDKKIGALERQKEFFDSIRSERDDLREETVKLKEELK</variation>
    <location>
        <position position="193"/>
    </location>
</feature>
<feature type="splice variant" id="VSP_020270" description="In isoform 3." evidence="6">
    <original>L</original>
    <variation>M</variation>
    <location>
        <position position="240"/>
    </location>
</feature>
<feature type="splice variant" id="VSP_020271" description="In isoform 2." evidence="7">
    <original>GKAKEVEVKKEIVEKVGQRETLQNSEQEQPKPNTGKDCVDRGVSHPGEKAENQRPAEDSALSPGPLAGAKCEQQVQSQDQENTSDLKNSEQIESHKVTNKSDSRASNSPEQSSCLEGLDSEVPGPTEDLKTDLGKGSFEPCPDYILGQTAEIDK</original>
    <variation>DVRLKKLIDERECLLEQIKKLKGQLEGRQKNNKLDLLRAEDGILENGTDAHVMDLQRDANRQISDLKFKLAKSEQEITALEQNVIRLESQVTRYRSAAENAEKIEDELKAEKRKLQRELRSALDKTEELEVSNGHLVKRLEKMKANRSALLSQQ</variation>
    <location>
        <begin position="241"/>
        <end position="394"/>
    </location>
</feature>
<feature type="splice variant" id="VSP_020272" description="In isoform 2." evidence="7">
    <location>
        <begin position="395"/>
        <end position="729"/>
    </location>
</feature>
<feature type="sequence conflict" description="In Ref. 2; BAE22022." evidence="8" ref="2">
    <original>N</original>
    <variation>K</variation>
    <location>
        <position position="122"/>
    </location>
</feature>
<feature type="modified residue" description="Phosphoserine" evidence="9">
    <location sequence="Q3UZ39-2">
        <position position="90"/>
    </location>
</feature>
<feature type="modified residue" description="Phosphoserine" evidence="9">
    <location sequence="Q3UZ39-2">
        <position position="97"/>
    </location>
</feature>
<protein>
    <recommendedName>
        <fullName>Leucine-rich repeat flightless-interacting protein 1</fullName>
        <shortName>LRR FLII-interacting protein 1</shortName>
    </recommendedName>
    <alternativeName>
        <fullName>FLI-LRR-associated protein 1</fullName>
        <shortName>Flap-1</shortName>
    </alternativeName>
    <alternativeName>
        <fullName>H186 FLAP</fullName>
    </alternativeName>
</protein>
<sequence>MTSPEGAQNKEIDCLSPEAQRLAEARLAAKRAARAEAREIRMKELERQQKEVEERPDKDFAEKGSRNMPSLSAATLASLGGTSSRRGSGDTSISMDTEASIREIKDSLAEVEEKYKKAMVSNAQLDNEKTNFMYQVDTLKDMLLELEEQLAESQRQYEEKNKEFEREKHAHSILQFQFAEVKEALRQREEMLEKHGIILNSEIATNGETSDTVNDVGYQAPTKITKEELNALKSAGEGTLGKAKEVEVKKEIVEKVGQRETLQNSEQEQPKPNTGKDCVDRGVSHPGEKAENQRPAEDSALSPGPLAGAKCEQQVQSQDQENTSDLKNSEQIESHKVTNKSDSRASNSPEQSSCLEGLDSEVPGPTEDLKTDLGKGSFEPCPDYILGQTAEIDKVTCTDSRGTGGNQREDEVQAGDTTVEDQVGTVASGPAKQSKGTENHGESCLKDGLGQSSERELTQEVAEPEEAIVQIPQAGGENTITKADDAEGRDEKPIQAEAQASPGAPINQSGHQDTTGPGSTDAQRTPPHAKERKKQGKSEQQAEALDSPQKKTKNKKKKNKKKKAATPAETCRDANEELNCQDPDVGDMEEEERLQVTDKKQASGSPEQKIRAGSREPVEDPQSGSSGKQNKVEEDGPTEGPTDILDQNSPQCEDREISPVGEKGPQCDTSQIGSEEGHVTSQHGGQAVENHNLDNSDLSGQLEGFNSESGGQAREEVGNSKSKEDCTMS</sequence>
<gene>
    <name type="primary">Lrrfip1</name>
    <name type="synonym">Flap</name>
</gene>
<evidence type="ECO:0000250" key="1"/>
<evidence type="ECO:0000250" key="2">
    <source>
        <dbReference type="UniProtKB" id="Q32MZ4"/>
    </source>
</evidence>
<evidence type="ECO:0000250" key="3">
    <source>
        <dbReference type="UniProtKB" id="Q66HF9"/>
    </source>
</evidence>
<evidence type="ECO:0000256" key="4">
    <source>
        <dbReference type="SAM" id="MobiDB-lite"/>
    </source>
</evidence>
<evidence type="ECO:0000269" key="5">
    <source>
    </source>
</evidence>
<evidence type="ECO:0000303" key="6">
    <source>
    </source>
</evidence>
<evidence type="ECO:0000303" key="7">
    <source>
    </source>
</evidence>
<evidence type="ECO:0000305" key="8"/>
<evidence type="ECO:0007744" key="9">
    <source>
    </source>
</evidence>
<accession>Q3UZ39</accession>
<accession>O70323</accession>
<accession>Q3TS94</accession>